<keyword id="KW-0002">3D-structure</keyword>
<keyword id="KW-1003">Cell membrane</keyword>
<keyword id="KW-0375">Hydrogen ion transport</keyword>
<keyword id="KW-0407">Ion channel</keyword>
<keyword id="KW-0406">Ion transport</keyword>
<keyword id="KW-0472">Membrane</keyword>
<keyword id="KW-1185">Reference proteome</keyword>
<keyword id="KW-0812">Transmembrane</keyword>
<keyword id="KW-1133">Transmembrane helix</keyword>
<keyword id="KW-0813">Transport</keyword>
<gene>
    <name type="primary">otop3</name>
</gene>
<reference key="1">
    <citation type="submission" date="2007-11" db="EMBL/GenBank/DDBJ databases">
        <authorList>
            <consortium name="NIH - Xenopus Gene Collection (XGC) project"/>
        </authorList>
    </citation>
    <scope>NUCLEOTIDE SEQUENCE [LARGE SCALE MRNA]</scope>
</reference>
<reference evidence="4" key="2">
    <citation type="journal article" date="2019" name="Elife">
        <title>Structural and functional characterization of an otopetrin family proton channel.</title>
        <authorList>
            <person name="Chen Q."/>
            <person name="Zeng W."/>
            <person name="She J."/>
            <person name="Bai X.C."/>
            <person name="Jiang Y."/>
        </authorList>
    </citation>
    <scope>STRUCTURE BY ELECTRON MICROSCOPY (3.92 ANGSTROMS)</scope>
    <scope>SUBCELLULAR LOCATION</scope>
    <scope>FUNCTION</scope>
    <scope>TRANSPORTER ACTIVITY</scope>
    <scope>TOPOLOGY</scope>
    <scope>MUTAGENESIS OF GLU-321; ASP-509; ARG-585; ASN-623; TYR-666; ARG-667 AND HIS-669</scope>
    <scope>ACTIVITY REGULATION</scope>
</reference>
<feature type="chain" id="PRO_0000460002" description="Proton channel OTOP3">
    <location>
        <begin position="1"/>
        <end position="681"/>
    </location>
</feature>
<feature type="topological domain" description="Cytoplasmic" evidence="2">
    <location>
        <begin position="1"/>
        <end position="112"/>
    </location>
</feature>
<feature type="transmembrane region" description="Helical; Name=1" evidence="2 4">
    <location>
        <begin position="113"/>
        <end position="133"/>
    </location>
</feature>
<feature type="topological domain" description="Extracellular" evidence="3">
    <location>
        <begin position="134"/>
        <end position="143"/>
    </location>
</feature>
<feature type="transmembrane region" description="Helical; Name=2" evidence="2 4">
    <location>
        <begin position="144"/>
        <end position="166"/>
    </location>
</feature>
<feature type="topological domain" description="Cytoplasmic" evidence="3">
    <location>
        <begin position="167"/>
        <end position="182"/>
    </location>
</feature>
<feature type="transmembrane region" description="Helical; Name=3" evidence="2 4">
    <location>
        <begin position="183"/>
        <end position="204"/>
    </location>
</feature>
<feature type="topological domain" description="Extracellular" evidence="3">
    <location>
        <begin position="205"/>
        <end position="216"/>
    </location>
</feature>
<feature type="transmembrane region" description="Helical; Name=4" evidence="2 4">
    <location>
        <begin position="217"/>
        <end position="240"/>
    </location>
</feature>
<feature type="topological domain" description="Cytoplasmic" evidence="3">
    <location>
        <begin position="241"/>
        <end position="248"/>
    </location>
</feature>
<feature type="transmembrane region" description="Helical; Name=5" evidence="2 4">
    <location>
        <begin position="249"/>
        <end position="271"/>
    </location>
</feature>
<feature type="topological domain" description="Extracellular" evidence="3">
    <location>
        <begin position="272"/>
        <end position="317"/>
    </location>
</feature>
<feature type="transmembrane region" description="Helical; Name=6" evidence="2 4">
    <location>
        <begin position="318"/>
        <end position="334"/>
    </location>
</feature>
<feature type="topological domain" description="Cytoplasmic" evidence="3">
    <location>
        <begin position="335"/>
        <end position="358"/>
    </location>
</feature>
<feature type="transmembrane region" description="Helical; Name=7" evidence="2 4">
    <location>
        <begin position="359"/>
        <end position="378"/>
    </location>
</feature>
<feature type="topological domain" description="Extracellular" evidence="3">
    <location>
        <begin position="379"/>
        <end position="392"/>
    </location>
</feature>
<feature type="transmembrane region" description="Helical; Name=8" evidence="2 4">
    <location>
        <begin position="393"/>
        <end position="415"/>
    </location>
</feature>
<feature type="topological domain" description="Cytoplasmic" evidence="3">
    <location>
        <begin position="416"/>
        <end position="507"/>
    </location>
</feature>
<feature type="transmembrane region" description="Helical; Name=9" evidence="2 4">
    <location>
        <begin position="508"/>
        <end position="529"/>
    </location>
</feature>
<feature type="topological domain" description="Extracellular" evidence="3">
    <location>
        <begin position="530"/>
        <end position="540"/>
    </location>
</feature>
<feature type="transmembrane region" description="Helical; Name=10" evidence="2 4">
    <location>
        <begin position="541"/>
        <end position="563"/>
    </location>
</feature>
<feature type="topological domain" description="Cytoplasmic" evidence="3">
    <location>
        <begin position="564"/>
        <end position="614"/>
    </location>
</feature>
<feature type="transmembrane region" description="Helical; Name=11" evidence="2 4">
    <location>
        <begin position="615"/>
        <end position="632"/>
    </location>
</feature>
<feature type="topological domain" description="Extracellular" evidence="3">
    <location>
        <begin position="633"/>
        <end position="651"/>
    </location>
</feature>
<feature type="transmembrane region" description="Helical; Name=12" evidence="2 4">
    <location>
        <begin position="652"/>
        <end position="674"/>
    </location>
</feature>
<feature type="topological domain" description="Cytoplasmic" evidence="2">
    <location>
        <begin position="675"/>
        <end position="681"/>
    </location>
</feature>
<feature type="region of interest" description="Disordered" evidence="1">
    <location>
        <begin position="1"/>
        <end position="26"/>
    </location>
</feature>
<feature type="compositionally biased region" description="Basic and acidic residues" evidence="1">
    <location>
        <begin position="1"/>
        <end position="25"/>
    </location>
</feature>
<feature type="mutagenesis site" description="Does not affect proton channel activity." evidence="2">
    <original>E</original>
    <variation>N</variation>
    <location>
        <position position="321"/>
    </location>
</feature>
<feature type="mutagenesis site" description="Abolishes proton channel activity." evidence="2">
    <original>E</original>
    <variation>Q</variation>
    <location>
        <position position="321"/>
    </location>
</feature>
<feature type="mutagenesis site" description="Exhibits reduced desensitization rate." evidence="2">
    <original>D</original>
    <variation>A</variation>
    <variation>N</variation>
    <location>
        <position position="509"/>
    </location>
</feature>
<feature type="mutagenesis site" description="Abolishes proton channel activity." evidence="2">
    <original>R</original>
    <variation>N</variation>
    <variation>E</variation>
    <location>
        <position position="585"/>
    </location>
</feature>
<feature type="mutagenesis site" description="Abolishes proton channel activity." evidence="2">
    <original>N</original>
    <variation>A</variation>
    <variation>D</variation>
    <location>
        <position position="623"/>
    </location>
</feature>
<feature type="mutagenesis site" description="Reduces proton channel activity." evidence="2">
    <original>N</original>
    <variation>Q</variation>
    <location>
        <position position="623"/>
    </location>
</feature>
<feature type="mutagenesis site" description="Reduces proton channel activity." evidence="2">
    <original>Y</original>
    <variation>A</variation>
    <variation>Q</variation>
    <location>
        <position position="666"/>
    </location>
</feature>
<feature type="mutagenesis site" description="Reduces proton channel activity." evidence="2">
    <original>R</original>
    <variation>A</variation>
    <location>
        <position position="667"/>
    </location>
</feature>
<feature type="mutagenesis site" description="Abolishes proton channel activity." evidence="2">
    <original>H</original>
    <variation>A</variation>
    <variation>Q</variation>
    <location>
        <position position="669"/>
    </location>
</feature>
<organism>
    <name type="scientific">Xenopus tropicalis</name>
    <name type="common">Western clawed frog</name>
    <name type="synonym">Silurana tropicalis</name>
    <dbReference type="NCBI Taxonomy" id="8364"/>
    <lineage>
        <taxon>Eukaryota</taxon>
        <taxon>Metazoa</taxon>
        <taxon>Chordata</taxon>
        <taxon>Craniata</taxon>
        <taxon>Vertebrata</taxon>
        <taxon>Euteleostomi</taxon>
        <taxon>Amphibia</taxon>
        <taxon>Batrachia</taxon>
        <taxon>Anura</taxon>
        <taxon>Pipoidea</taxon>
        <taxon>Pipidae</taxon>
        <taxon>Xenopodinae</taxon>
        <taxon>Xenopus</taxon>
        <taxon>Silurana</taxon>
    </lineage>
</organism>
<dbReference type="EMBL" id="BC155406">
    <property type="protein sequence ID" value="AAI55407.1"/>
    <property type="molecule type" value="mRNA"/>
</dbReference>
<dbReference type="RefSeq" id="NP_001106584.1">
    <property type="nucleotide sequence ID" value="NM_001113113.1"/>
</dbReference>
<dbReference type="RefSeq" id="XP_012826967.1">
    <property type="nucleotide sequence ID" value="XM_012971513.2"/>
</dbReference>
<dbReference type="PDB" id="6O84">
    <property type="method" value="EM"/>
    <property type="resolution" value="3.92 A"/>
    <property type="chains" value="A/B=1-681"/>
</dbReference>
<dbReference type="PDBsum" id="6O84"/>
<dbReference type="EMDB" id="EMD-0650"/>
<dbReference type="SMR" id="A9JTM7"/>
<dbReference type="STRING" id="8364.ENSXETP00000043623"/>
<dbReference type="TCDB" id="1.A.110.1.9">
    <property type="family name" value="the channel-forming otopetrin (otop) family"/>
</dbReference>
<dbReference type="PaxDb" id="8364-ENSXETP00000023383"/>
<dbReference type="GeneID" id="100127796"/>
<dbReference type="KEGG" id="xtr:100127796"/>
<dbReference type="AGR" id="Xenbase:XB-GENE-993899"/>
<dbReference type="CTD" id="347741"/>
<dbReference type="Xenbase" id="XB-GENE-993899">
    <property type="gene designation" value="otop3"/>
</dbReference>
<dbReference type="eggNOG" id="KOG2331">
    <property type="taxonomic scope" value="Eukaryota"/>
</dbReference>
<dbReference type="eggNOG" id="KOG4740">
    <property type="taxonomic scope" value="Eukaryota"/>
</dbReference>
<dbReference type="OMA" id="MVIELEW"/>
<dbReference type="OrthoDB" id="6429739at2759"/>
<dbReference type="Proteomes" id="UP000008143">
    <property type="component" value="Chromosome 10"/>
</dbReference>
<dbReference type="GO" id="GO:0005886">
    <property type="term" value="C:plasma membrane"/>
    <property type="evidence" value="ECO:0000314"/>
    <property type="project" value="UniProtKB"/>
</dbReference>
<dbReference type="GO" id="GO:0042802">
    <property type="term" value="F:identical protein binding"/>
    <property type="evidence" value="ECO:0000314"/>
    <property type="project" value="UniProtKB"/>
</dbReference>
<dbReference type="GO" id="GO:0015252">
    <property type="term" value="F:proton channel activity"/>
    <property type="evidence" value="ECO:0000314"/>
    <property type="project" value="UniProtKB"/>
</dbReference>
<dbReference type="GO" id="GO:1902600">
    <property type="term" value="P:proton transmembrane transport"/>
    <property type="evidence" value="ECO:0000314"/>
    <property type="project" value="UniProtKB"/>
</dbReference>
<dbReference type="InterPro" id="IPR004878">
    <property type="entry name" value="Otopetrin"/>
</dbReference>
<dbReference type="PANTHER" id="PTHR21522">
    <property type="entry name" value="PROTON CHANNEL OTOP"/>
    <property type="match status" value="1"/>
</dbReference>
<dbReference type="PANTHER" id="PTHR21522:SF64">
    <property type="entry name" value="PROTON CHANNEL OTOP3"/>
    <property type="match status" value="1"/>
</dbReference>
<dbReference type="Pfam" id="PF03189">
    <property type="entry name" value="Otopetrin"/>
    <property type="match status" value="4"/>
</dbReference>
<sequence>MLSKEEPACRQFHSREKTWGNEHNGKTVTQANNKEHKVPAVRRGDIGQREPAAHPASHIQGTMASENTGEQATCKDQYMDLDAPGNNLEHSWLHRHCEIPTTLHQRAKKTGRLFSGLFGLNLMFLGGTVVSSVALSNKAVPERDSQSFLCILMLLSSVWALYHLLFIRNQNGAVHHDHHAGAMWLKASLAIFGVCSIILSIFEIGHALLLQNCEILMDIVFFSIEIVFVSVQTVLLWVSCKDCVQMHHSVTRYGIMLTLATDILLWLTAVIDDSLEQDLEILQSNSTQDESNEMAQCQCPTDSMCWGLKQGYVTMFPFNIEYSLICATLLFIMWKNVGRREKLHSDPPRHTFQLRGIIYGPLIGGAALLVGISVFVQYQVEATSGMVSILSYHMYYGYKMIILAPMIVCSVAGIIAHSLREKEKKGQKETGRSDQDWLHMEDVGSENKNTDYSSGQYQSSQGDEKIQGYSLAQFALDNEKEKLEHRQGNTTKKHNTHQGKMKNYTRKLDVTLLFVSAVGQLGISYFSIIATVVTTPWTMLSALNFSNSLLLILQYLSQTMFIIESMRSIHEEEKEKPGHHEESHRRMSVQEMHKAPPSCLDAGHLGLSRRVVKEMAMFLMICNIMCWILGAFGAHPLYMNGLERQLYGSGIWLAILNIGLPLSVFYRMHSVGILLEVYLHA</sequence>
<comment type="function">
    <text evidence="2">Proton-selective channel gated by extracellular protons.</text>
</comment>
<comment type="catalytic activity">
    <reaction evidence="2">
        <text>H(+)(in) = H(+)(out)</text>
        <dbReference type="Rhea" id="RHEA:34979"/>
        <dbReference type="ChEBI" id="CHEBI:15378"/>
    </reaction>
</comment>
<comment type="activity regulation">
    <text evidence="2">pH regulates the proton channel activity from both sides of the plasma membrane. Low pH activates the channel from the extracellular side but inactivates the channel on the intracellular side (PubMed:30973323). Zn(2+) and Ca(2+) can partially block the channel (PubMed:30973323).</text>
</comment>
<comment type="subunit">
    <text evidence="2">Homodimer.</text>
</comment>
<comment type="subcellular location">
    <subcellularLocation>
        <location evidence="2">Cell membrane</location>
        <topology evidence="2">Multi-pass membrane protein</topology>
    </subcellularLocation>
</comment>
<comment type="similarity">
    <text evidence="3">Belongs to the otopetrin family.</text>
</comment>
<protein>
    <recommendedName>
        <fullName>Proton channel OTOP3</fullName>
    </recommendedName>
    <alternativeName>
        <fullName>Otopetrin-3</fullName>
    </alternativeName>
</protein>
<proteinExistence type="evidence at protein level"/>
<accession>A9JTM7</accession>
<accession>F6V1E6</accession>
<accession>F6W1Z2</accession>
<evidence type="ECO:0000256" key="1">
    <source>
        <dbReference type="SAM" id="MobiDB-lite"/>
    </source>
</evidence>
<evidence type="ECO:0000269" key="2">
    <source>
    </source>
</evidence>
<evidence type="ECO:0000305" key="3"/>
<evidence type="ECO:0007744" key="4">
    <source>
        <dbReference type="PDB" id="6O84"/>
    </source>
</evidence>
<name>OTOP3_XENTR</name>